<gene>
    <name type="primary">FPR1</name>
    <name type="ORF">FGRAMPH1_01T26507</name>
    <name type="ORF">FGRRES_09690</name>
    <name type="ORF">FGSG_09690</name>
</gene>
<organism>
    <name type="scientific">Gibberella zeae (strain ATCC MYA-4620 / CBS 123657 / FGSC 9075 / NRRL 31084 / PH-1)</name>
    <name type="common">Wheat head blight fungus</name>
    <name type="synonym">Fusarium graminearum</name>
    <dbReference type="NCBI Taxonomy" id="229533"/>
    <lineage>
        <taxon>Eukaryota</taxon>
        <taxon>Fungi</taxon>
        <taxon>Dikarya</taxon>
        <taxon>Ascomycota</taxon>
        <taxon>Pezizomycotina</taxon>
        <taxon>Sordariomycetes</taxon>
        <taxon>Hypocreomycetidae</taxon>
        <taxon>Hypocreales</taxon>
        <taxon>Nectriaceae</taxon>
        <taxon>Fusarium</taxon>
    </lineage>
</organism>
<evidence type="ECO:0000250" key="1"/>
<evidence type="ECO:0000255" key="2">
    <source>
        <dbReference type="PROSITE-ProRule" id="PRU00277"/>
    </source>
</evidence>
<evidence type="ECO:0000256" key="3">
    <source>
        <dbReference type="SAM" id="MobiDB-lite"/>
    </source>
</evidence>
<evidence type="ECO:0000305" key="4"/>
<protein>
    <recommendedName>
        <fullName>FK506-binding protein 1</fullName>
        <shortName>FKBP</shortName>
        <ecNumber>5.2.1.8</ecNumber>
    </recommendedName>
    <alternativeName>
        <fullName>FkbA</fullName>
    </alternativeName>
    <alternativeName>
        <fullName>Peptidyl-prolyl cis-trans isomerase</fullName>
        <shortName>PPIase</shortName>
    </alternativeName>
    <alternativeName>
        <fullName>Rapamycin-binding protein</fullName>
    </alternativeName>
</protein>
<keyword id="KW-0963">Cytoplasm</keyword>
<keyword id="KW-0413">Isomerase</keyword>
<keyword id="KW-1185">Reference proteome</keyword>
<keyword id="KW-0697">Rotamase</keyword>
<name>FKBP_GIBZE</name>
<reference key="1">
    <citation type="journal article" date="2007" name="Science">
        <title>The Fusarium graminearum genome reveals a link between localized polymorphism and pathogen specialization.</title>
        <authorList>
            <person name="Cuomo C.A."/>
            <person name="Gueldener U."/>
            <person name="Xu J.-R."/>
            <person name="Trail F."/>
            <person name="Turgeon B.G."/>
            <person name="Di Pietro A."/>
            <person name="Walton J.D."/>
            <person name="Ma L.-J."/>
            <person name="Baker S.E."/>
            <person name="Rep M."/>
            <person name="Adam G."/>
            <person name="Antoniw J."/>
            <person name="Baldwin T."/>
            <person name="Calvo S.E."/>
            <person name="Chang Y.-L."/>
            <person name="DeCaprio D."/>
            <person name="Gale L.R."/>
            <person name="Gnerre S."/>
            <person name="Goswami R.S."/>
            <person name="Hammond-Kosack K."/>
            <person name="Harris L.J."/>
            <person name="Hilburn K."/>
            <person name="Kennell J.C."/>
            <person name="Kroken S."/>
            <person name="Magnuson J.K."/>
            <person name="Mannhaupt G."/>
            <person name="Mauceli E.W."/>
            <person name="Mewes H.-W."/>
            <person name="Mitterbauer R."/>
            <person name="Muehlbauer G."/>
            <person name="Muensterkoetter M."/>
            <person name="Nelson D."/>
            <person name="O'Donnell K."/>
            <person name="Ouellet T."/>
            <person name="Qi W."/>
            <person name="Quesneville H."/>
            <person name="Roncero M.I.G."/>
            <person name="Seong K.-Y."/>
            <person name="Tetko I.V."/>
            <person name="Urban M."/>
            <person name="Waalwijk C."/>
            <person name="Ward T.J."/>
            <person name="Yao J."/>
            <person name="Birren B.W."/>
            <person name="Kistler H.C."/>
        </authorList>
    </citation>
    <scope>NUCLEOTIDE SEQUENCE [LARGE SCALE GENOMIC DNA]</scope>
    <source>
        <strain>ATCC MYA-4620 / CBS 123657 / FGSC 9075 / NRRL 31084 / PH-1</strain>
    </source>
</reference>
<reference key="2">
    <citation type="journal article" date="2010" name="Nature">
        <title>Comparative genomics reveals mobile pathogenicity chromosomes in Fusarium.</title>
        <authorList>
            <person name="Ma L.-J."/>
            <person name="van der Does H.C."/>
            <person name="Borkovich K.A."/>
            <person name="Coleman J.J."/>
            <person name="Daboussi M.-J."/>
            <person name="Di Pietro A."/>
            <person name="Dufresne M."/>
            <person name="Freitag M."/>
            <person name="Grabherr M."/>
            <person name="Henrissat B."/>
            <person name="Houterman P.M."/>
            <person name="Kang S."/>
            <person name="Shim W.-B."/>
            <person name="Woloshuk C."/>
            <person name="Xie X."/>
            <person name="Xu J.-R."/>
            <person name="Antoniw J."/>
            <person name="Baker S.E."/>
            <person name="Bluhm B.H."/>
            <person name="Breakspear A."/>
            <person name="Brown D.W."/>
            <person name="Butchko R.A.E."/>
            <person name="Chapman S."/>
            <person name="Coulson R."/>
            <person name="Coutinho P.M."/>
            <person name="Danchin E.G.J."/>
            <person name="Diener A."/>
            <person name="Gale L.R."/>
            <person name="Gardiner D.M."/>
            <person name="Goff S."/>
            <person name="Hammond-Kosack K.E."/>
            <person name="Hilburn K."/>
            <person name="Hua-Van A."/>
            <person name="Jonkers W."/>
            <person name="Kazan K."/>
            <person name="Kodira C.D."/>
            <person name="Koehrsen M."/>
            <person name="Kumar L."/>
            <person name="Lee Y.-H."/>
            <person name="Li L."/>
            <person name="Manners J.M."/>
            <person name="Miranda-Saavedra D."/>
            <person name="Mukherjee M."/>
            <person name="Park G."/>
            <person name="Park J."/>
            <person name="Park S.-Y."/>
            <person name="Proctor R.H."/>
            <person name="Regev A."/>
            <person name="Ruiz-Roldan M.C."/>
            <person name="Sain D."/>
            <person name="Sakthikumar S."/>
            <person name="Sykes S."/>
            <person name="Schwartz D.C."/>
            <person name="Turgeon B.G."/>
            <person name="Wapinski I."/>
            <person name="Yoder O."/>
            <person name="Young S."/>
            <person name="Zeng Q."/>
            <person name="Zhou S."/>
            <person name="Galagan J."/>
            <person name="Cuomo C.A."/>
            <person name="Kistler H.C."/>
            <person name="Rep M."/>
        </authorList>
    </citation>
    <scope>GENOME REANNOTATION</scope>
    <source>
        <strain>ATCC MYA-4620 / CBS 123657 / FGSC 9075 / NRRL 31084 / PH-1</strain>
    </source>
</reference>
<reference key="3">
    <citation type="journal article" date="2015" name="BMC Genomics">
        <title>The completed genome sequence of the pathogenic ascomycete fungus Fusarium graminearum.</title>
        <authorList>
            <person name="King R."/>
            <person name="Urban M."/>
            <person name="Hammond-Kosack M.C.U."/>
            <person name="Hassani-Pak K."/>
            <person name="Hammond-Kosack K.E."/>
        </authorList>
    </citation>
    <scope>NUCLEOTIDE SEQUENCE [LARGE SCALE GENOMIC DNA]</scope>
    <source>
        <strain>ATCC MYA-4620 / CBS 123657 / FGSC 9075 / NRRL 31084 / PH-1</strain>
    </source>
</reference>
<reference key="4">
    <citation type="journal article" date="2006" name="BMC Genomics">
        <title>Identification and comparative analysis of sixteen fungal peptidyl-prolyl cis/trans isomerase repertoires.</title>
        <authorList>
            <person name="Pemberton T.J."/>
        </authorList>
    </citation>
    <scope>IDENTIFICATION OF PROBABLE INITIATION SITE</scope>
</reference>
<sequence length="111" mass="11884">MGVEKTIITQGSGPSPQVGQKVTMEYTGWLQKEDGTKGDQFDTSVGRGDFVVNIGVGQVIKGWDEGVTQMKLGEKATLHISPDYGYGPRGFPGAIPPNSTLIFDVELKKIG</sequence>
<accession>Q4HZB8</accession>
<accession>A0A0E0SGG5</accession>
<accession>A0A1I9FNW1</accession>
<accession>I1RZ64</accession>
<comment type="function">
    <text evidence="1">PPIases accelerate the folding of proteins. It catalyzes the cis-trans isomerization of proline imidic peptide bonds in oligopeptides (By similarity).</text>
</comment>
<comment type="catalytic activity">
    <reaction>
        <text>[protein]-peptidylproline (omega=180) = [protein]-peptidylproline (omega=0)</text>
        <dbReference type="Rhea" id="RHEA:16237"/>
        <dbReference type="Rhea" id="RHEA-COMP:10747"/>
        <dbReference type="Rhea" id="RHEA-COMP:10748"/>
        <dbReference type="ChEBI" id="CHEBI:83833"/>
        <dbReference type="ChEBI" id="CHEBI:83834"/>
        <dbReference type="EC" id="5.2.1.8"/>
    </reaction>
</comment>
<comment type="activity regulation">
    <text evidence="1">Inhibited by both FK506 and rapamycin.</text>
</comment>
<comment type="subcellular location">
    <subcellularLocation>
        <location evidence="1">Cytoplasm</location>
    </subcellularLocation>
</comment>
<comment type="similarity">
    <text evidence="4">Belongs to the FKBP-type PPIase family. FKBP1 subfamily.</text>
</comment>
<comment type="sequence caution" evidence="4">
    <conflict type="erroneous initiation">
        <sequence resource="EMBL-CDS" id="CEF85528"/>
    </conflict>
    <text>Extended N-terminus.</text>
</comment>
<comment type="sequence caution" evidence="4">
    <conflict type="erroneous initiation">
        <sequence resource="EMBL-CDS" id="ESU16301"/>
    </conflict>
    <text>Extended N-terminus.</text>
</comment>
<proteinExistence type="inferred from homology"/>
<feature type="chain" id="PRO_0000233327" description="FK506-binding protein 1">
    <location>
        <begin position="1"/>
        <end position="111"/>
    </location>
</feature>
<feature type="domain" description="PPIase FKBP-type" evidence="2">
    <location>
        <begin position="19"/>
        <end position="111"/>
    </location>
</feature>
<feature type="region of interest" description="Disordered" evidence="3">
    <location>
        <begin position="1"/>
        <end position="20"/>
    </location>
</feature>
<feature type="compositionally biased region" description="Polar residues" evidence="3">
    <location>
        <begin position="7"/>
        <end position="20"/>
    </location>
</feature>
<dbReference type="EC" id="5.2.1.8"/>
<dbReference type="EMBL" id="DS231668">
    <property type="protein sequence ID" value="ESU16301.1"/>
    <property type="status" value="ALT_INIT"/>
    <property type="molecule type" value="Genomic_DNA"/>
</dbReference>
<dbReference type="EMBL" id="HG970335">
    <property type="protein sequence ID" value="CEF85528.1"/>
    <property type="status" value="ALT_INIT"/>
    <property type="molecule type" value="Genomic_DNA"/>
</dbReference>
<dbReference type="RefSeq" id="XP_011328015.1">
    <property type="nucleotide sequence ID" value="XM_011329713.1"/>
</dbReference>
<dbReference type="SMR" id="Q4HZB8"/>
<dbReference type="FunCoup" id="Q4HZB8">
    <property type="interactions" value="389"/>
</dbReference>
<dbReference type="STRING" id="229533.Q4HZB8"/>
<dbReference type="GeneID" id="23556629"/>
<dbReference type="KEGG" id="fgr:FGSG_09690"/>
<dbReference type="eggNOG" id="KOG0544">
    <property type="taxonomic scope" value="Eukaryota"/>
</dbReference>
<dbReference type="HOGENOM" id="CLU_013615_12_1_1"/>
<dbReference type="InParanoid" id="Q4HZB8"/>
<dbReference type="OrthoDB" id="129254at110618"/>
<dbReference type="Proteomes" id="UP000070720">
    <property type="component" value="Chromosome 4"/>
</dbReference>
<dbReference type="GO" id="GO:0005737">
    <property type="term" value="C:cytoplasm"/>
    <property type="evidence" value="ECO:0007669"/>
    <property type="project" value="UniProtKB-SubCell"/>
</dbReference>
<dbReference type="GO" id="GO:0003755">
    <property type="term" value="F:peptidyl-prolyl cis-trans isomerase activity"/>
    <property type="evidence" value="ECO:0007669"/>
    <property type="project" value="UniProtKB-KW"/>
</dbReference>
<dbReference type="FunFam" id="3.10.50.40:FF:000006">
    <property type="entry name" value="Peptidyl-prolyl cis-trans isomerase"/>
    <property type="match status" value="1"/>
</dbReference>
<dbReference type="Gene3D" id="3.10.50.40">
    <property type="match status" value="1"/>
</dbReference>
<dbReference type="InterPro" id="IPR050689">
    <property type="entry name" value="FKBP-type_PPIase"/>
</dbReference>
<dbReference type="InterPro" id="IPR046357">
    <property type="entry name" value="PPIase_dom_sf"/>
</dbReference>
<dbReference type="InterPro" id="IPR001179">
    <property type="entry name" value="PPIase_FKBP_dom"/>
</dbReference>
<dbReference type="PANTHER" id="PTHR10516:SF443">
    <property type="entry name" value="FK506-BINDING PROTEIN 59-RELATED"/>
    <property type="match status" value="1"/>
</dbReference>
<dbReference type="PANTHER" id="PTHR10516">
    <property type="entry name" value="PEPTIDYL-PROLYL CIS-TRANS ISOMERASE"/>
    <property type="match status" value="1"/>
</dbReference>
<dbReference type="Pfam" id="PF00254">
    <property type="entry name" value="FKBP_C"/>
    <property type="match status" value="1"/>
</dbReference>
<dbReference type="SUPFAM" id="SSF54534">
    <property type="entry name" value="FKBP-like"/>
    <property type="match status" value="1"/>
</dbReference>
<dbReference type="PROSITE" id="PS50059">
    <property type="entry name" value="FKBP_PPIASE"/>
    <property type="match status" value="1"/>
</dbReference>